<accession>Q8MZR6</accession>
<sequence length="464" mass="52614">MGKCCRMLIFAAIAGIAVLYYQITKELPKPNIPLDTWWGPGKPQNVDISIRPFKININNKVIENLKLKLNDVQYTLPLEGINFEYGFNTDSLKKIVDFWRTQYNWREREALLNKYPHFKTNIQGLDIHYVHIKPQVSKNIEVLPLVMIHGWPGSFVEFYKIIPMLTTPRAGYNFVFELILPSIPGYGFSQAAAKPGLGSTQVAVIMRNLMERIGFKKYYVQGGDWGSMIISAMSTLFPENVLGQHSNMCFVNTPSSNIKAIIGSFFPESFAGTGNAHKMYPMSEHFFTLLEEMGYLHLQATKPDTVGVALRDSPAGLAAYILEKFSTWTNRSWRSVKDGNLLLKYNIPELLDNVMIYYVTDSITTSMRLYAESFTKAHLALNLDRVRNHVPAACAKFPNELAYVTDCQLAEKYKTLLQSNDMPSGGHFAAFEEPGLLAEDIFTAVKKFKEFYSKKAESQKKADL</sequence>
<gene>
    <name evidence="6" type="primary">EH1</name>
</gene>
<dbReference type="EC" id="3.3.2.9" evidence="5"/>
<dbReference type="EMBL" id="AF503908">
    <property type="protein sequence ID" value="AAM22694.1"/>
    <property type="molecule type" value="mRNA"/>
</dbReference>
<dbReference type="SMR" id="Q8MZR6"/>
<dbReference type="ESTHER" id="ctefe-Q8MZR6">
    <property type="family name" value="Epoxide_hydrolase"/>
</dbReference>
<dbReference type="MEROPS" id="S33.971"/>
<dbReference type="EnsemblMetazoa" id="XM_026620932.1">
    <property type="protein sequence ID" value="XP_026476717.1"/>
    <property type="gene ID" value="LOC113382706"/>
</dbReference>
<dbReference type="OrthoDB" id="7130006at2759"/>
<dbReference type="GO" id="GO:0005789">
    <property type="term" value="C:endoplasmic reticulum membrane"/>
    <property type="evidence" value="ECO:0007669"/>
    <property type="project" value="UniProtKB-SubCell"/>
</dbReference>
<dbReference type="GO" id="GO:0033961">
    <property type="term" value="F:cis-stilbene-oxide hydrolase activity"/>
    <property type="evidence" value="ECO:0007669"/>
    <property type="project" value="UniProtKB-EC"/>
</dbReference>
<dbReference type="GO" id="GO:0009056">
    <property type="term" value="P:catabolic process"/>
    <property type="evidence" value="ECO:0007669"/>
    <property type="project" value="UniProtKB-KW"/>
</dbReference>
<dbReference type="GO" id="GO:0097176">
    <property type="term" value="P:epoxide metabolic process"/>
    <property type="evidence" value="ECO:0007669"/>
    <property type="project" value="TreeGrafter"/>
</dbReference>
<dbReference type="Gene3D" id="3.40.50.1820">
    <property type="entry name" value="alpha/beta hydrolase"/>
    <property type="match status" value="1"/>
</dbReference>
<dbReference type="InterPro" id="IPR029058">
    <property type="entry name" value="AB_hydrolase_fold"/>
</dbReference>
<dbReference type="InterPro" id="IPR000639">
    <property type="entry name" value="Epox_hydrolase-like"/>
</dbReference>
<dbReference type="InterPro" id="IPR010497">
    <property type="entry name" value="Epoxide_hydro_N"/>
</dbReference>
<dbReference type="InterPro" id="IPR016292">
    <property type="entry name" value="Epoxide_hydrolase"/>
</dbReference>
<dbReference type="PANTHER" id="PTHR21661:SF35">
    <property type="entry name" value="EPOXIDE HYDROLASE"/>
    <property type="match status" value="1"/>
</dbReference>
<dbReference type="PANTHER" id="PTHR21661">
    <property type="entry name" value="EPOXIDE HYDROLASE 1-RELATED"/>
    <property type="match status" value="1"/>
</dbReference>
<dbReference type="Pfam" id="PF06441">
    <property type="entry name" value="EHN"/>
    <property type="match status" value="1"/>
</dbReference>
<dbReference type="PIRSF" id="PIRSF001112">
    <property type="entry name" value="Epoxide_hydrolase"/>
    <property type="match status" value="1"/>
</dbReference>
<dbReference type="PRINTS" id="PR00412">
    <property type="entry name" value="EPOXHYDRLASE"/>
</dbReference>
<dbReference type="SUPFAM" id="SSF53474">
    <property type="entry name" value="alpha/beta-Hydrolases"/>
    <property type="match status" value="1"/>
</dbReference>
<reference evidence="7 8" key="1">
    <citation type="journal article" date="2002" name="Arch. Insect Biochem. Physiol.">
        <title>Cloning, partial purification and in vivo developmental profile of expression of the juvenile hormone epoxide hydrolase of Ctenocephalides felis.</title>
        <authorList>
            <person name="Keiser K.C.L."/>
            <person name="Brandt K.S."/>
            <person name="Silver G.M."/>
            <person name="Wisnewski N."/>
        </authorList>
    </citation>
    <scope>NUCLEOTIDE SEQUENCE [MRNA]</scope>
    <scope>PROTEIN SEQUENCE OF 2-26</scope>
    <scope>FUNCTION</scope>
    <scope>CATALYTIC ACTIVITY</scope>
    <scope>TISSUE SPECIFICITY</scope>
    <scope>DEVELOPMENTAL STAGE</scope>
    <source>
        <tissue evidence="5">Larva</tissue>
    </source>
</reference>
<proteinExistence type="evidence at protein level"/>
<evidence type="ECO:0000250" key="1">
    <source>
        <dbReference type="UniProtKB" id="P07687"/>
    </source>
</evidence>
<evidence type="ECO:0000250" key="2">
    <source>
        <dbReference type="UniProtKB" id="P34913"/>
    </source>
</evidence>
<evidence type="ECO:0000250" key="3">
    <source>
        <dbReference type="UniProtKB" id="Q6U6J0"/>
    </source>
</evidence>
<evidence type="ECO:0000255" key="4"/>
<evidence type="ECO:0000269" key="5">
    <source>
    </source>
</evidence>
<evidence type="ECO:0000303" key="6">
    <source>
    </source>
</evidence>
<evidence type="ECO:0000305" key="7"/>
<evidence type="ECO:0000312" key="8">
    <source>
        <dbReference type="EMBL" id="AAM22694.1"/>
    </source>
</evidence>
<protein>
    <recommendedName>
        <fullName>Juvenile hormone epoxide hydrolase 1</fullName>
        <ecNumber evidence="5">3.3.2.9</ecNumber>
    </recommendedName>
    <alternativeName>
        <fullName>CfEH1</fullName>
    </alternativeName>
    <alternativeName>
        <fullName>Juvenile hormone epoxide hydrolase I</fullName>
        <shortName>JHEH I</shortName>
    </alternativeName>
    <alternativeName>
        <fullName>Juvenile hormone-specific epoxide hydrolase I</fullName>
    </alternativeName>
</protein>
<feature type="initiator methionine" description="Removed" evidence="5">
    <location>
        <position position="1"/>
    </location>
</feature>
<feature type="chain" id="PRO_0000080860" description="Juvenile hormone epoxide hydrolase 1">
    <location>
        <begin position="2"/>
        <end position="464"/>
    </location>
</feature>
<feature type="transmembrane region" description="Helical" evidence="4">
    <location>
        <begin position="7"/>
        <end position="27"/>
    </location>
</feature>
<feature type="active site" description="Nucleophile" evidence="1">
    <location>
        <position position="224"/>
    </location>
</feature>
<feature type="active site" description="Proton donor" evidence="2">
    <location>
        <position position="370"/>
    </location>
</feature>
<feature type="active site" description="Proton acceptor" evidence="1">
    <location>
        <position position="427"/>
    </location>
</feature>
<name>HYEP1_CTEFE</name>
<keyword id="KW-0058">Aromatic hydrocarbons catabolism</keyword>
<keyword id="KW-0903">Direct protein sequencing</keyword>
<keyword id="KW-0256">Endoplasmic reticulum</keyword>
<keyword id="KW-0378">Hydrolase</keyword>
<keyword id="KW-0472">Membrane</keyword>
<keyword id="KW-0492">Microsome</keyword>
<keyword id="KW-0812">Transmembrane</keyword>
<keyword id="KW-1133">Transmembrane helix</keyword>
<comment type="function">
    <text evidence="5">Catalyzes juvenile hormone hydrolysis.</text>
</comment>
<comment type="catalytic activity">
    <reaction evidence="5">
        <text>cis-stilbene oxide + H2O = (1R,2R)-hydrobenzoin</text>
        <dbReference type="Rhea" id="RHEA:23900"/>
        <dbReference type="ChEBI" id="CHEBI:15377"/>
        <dbReference type="ChEBI" id="CHEBI:50004"/>
        <dbReference type="ChEBI" id="CHEBI:50014"/>
        <dbReference type="EC" id="3.3.2.9"/>
    </reaction>
</comment>
<comment type="catalytic activity">
    <reaction evidence="5">
        <text>1-(4-methoxyphenyl)-N-methyl-N-[(3-methyloxetan-3-yl)methyl]methanamine + H2O = 2-{[(4-methoxybenzyl)(methyl)amino]methyl}-2-methylpropane-1,3-diol</text>
        <dbReference type="Rhea" id="RHEA:55764"/>
        <dbReference type="ChEBI" id="CHEBI:15377"/>
        <dbReference type="ChEBI" id="CHEBI:139161"/>
        <dbReference type="ChEBI" id="CHEBI:139164"/>
        <dbReference type="EC" id="3.3.2.9"/>
    </reaction>
</comment>
<comment type="subcellular location">
    <subcellularLocation>
        <location evidence="3">Microsome membrane</location>
        <topology evidence="1">Single-pass membrane protein</topology>
    </subcellularLocation>
    <subcellularLocation>
        <location evidence="3">Endoplasmic reticulum membrane</location>
        <topology evidence="1">Single-pass membrane protein</topology>
    </subcellularLocation>
</comment>
<comment type="tissue specificity">
    <text evidence="5">Developing oocytes, fat body and midgut epithelium of adults.</text>
</comment>
<comment type="developmental stage">
    <text evidence="5">Expressed in all stages examined from first instar larva to adult. Expression remains relatively constant throughout the larval stages and elevates slightly in adults.</text>
</comment>
<comment type="similarity">
    <text evidence="4">Belongs to the peptidase S33 family.</text>
</comment>
<organism>
    <name type="scientific">Ctenocephalides felis</name>
    <name type="common">Cat flea</name>
    <dbReference type="NCBI Taxonomy" id="7515"/>
    <lineage>
        <taxon>Eukaryota</taxon>
        <taxon>Metazoa</taxon>
        <taxon>Ecdysozoa</taxon>
        <taxon>Arthropoda</taxon>
        <taxon>Hexapoda</taxon>
        <taxon>Insecta</taxon>
        <taxon>Pterygota</taxon>
        <taxon>Neoptera</taxon>
        <taxon>Endopterygota</taxon>
        <taxon>Siphonaptera</taxon>
        <taxon>Pulicidae</taxon>
        <taxon>Archaeopsyllinae</taxon>
        <taxon>Ctenocephalides</taxon>
    </lineage>
</organism>